<comment type="function">
    <text>Sequence-specific transcription factor which is part of a developmental regulatory system that provides cells with specific positional identities on the anterior-posterior axis.</text>
</comment>
<comment type="subcellular location">
    <subcellularLocation>
        <location>Nucleus</location>
    </subcellularLocation>
</comment>
<comment type="similarity">
    <text evidence="3">Belongs to the Antp homeobox family.</text>
</comment>
<gene>
    <name type="primary">HOXB8</name>
    <name type="synonym">CHOX-2.4</name>
</gene>
<organism>
    <name type="scientific">Gallus gallus</name>
    <name type="common">Chicken</name>
    <dbReference type="NCBI Taxonomy" id="9031"/>
    <lineage>
        <taxon>Eukaryota</taxon>
        <taxon>Metazoa</taxon>
        <taxon>Chordata</taxon>
        <taxon>Craniata</taxon>
        <taxon>Vertebrata</taxon>
        <taxon>Euteleostomi</taxon>
        <taxon>Archelosauria</taxon>
        <taxon>Archosauria</taxon>
        <taxon>Dinosauria</taxon>
        <taxon>Saurischia</taxon>
        <taxon>Theropoda</taxon>
        <taxon>Coelurosauria</taxon>
        <taxon>Aves</taxon>
        <taxon>Neognathae</taxon>
        <taxon>Galloanserae</taxon>
        <taxon>Galliformes</taxon>
        <taxon>Phasianidae</taxon>
        <taxon>Phasianinae</taxon>
        <taxon>Gallus</taxon>
    </lineage>
</organism>
<dbReference type="EMBL" id="X52748">
    <property type="protein sequence ID" value="CAB57799.1"/>
    <property type="molecule type" value="mRNA"/>
</dbReference>
<dbReference type="PIR" id="S10884">
    <property type="entry name" value="S10884"/>
</dbReference>
<dbReference type="SMR" id="P23681"/>
<dbReference type="FunCoup" id="P23681">
    <property type="interactions" value="319"/>
</dbReference>
<dbReference type="STRING" id="9031.ENSGALP00000050767"/>
<dbReference type="VEuPathDB" id="HostDB:geneid_395711"/>
<dbReference type="InParanoid" id="P23681"/>
<dbReference type="OrthoDB" id="6159439at2759"/>
<dbReference type="Proteomes" id="UP000000539">
    <property type="component" value="Unassembled WGS sequence"/>
</dbReference>
<dbReference type="GO" id="GO:0005634">
    <property type="term" value="C:nucleus"/>
    <property type="evidence" value="ECO:0007669"/>
    <property type="project" value="UniProtKB-SubCell"/>
</dbReference>
<dbReference type="GO" id="GO:0003677">
    <property type="term" value="F:DNA binding"/>
    <property type="evidence" value="ECO:0007669"/>
    <property type="project" value="UniProtKB-KW"/>
</dbReference>
<dbReference type="GO" id="GO:0003700">
    <property type="term" value="F:DNA-binding transcription factor activity"/>
    <property type="evidence" value="ECO:0007669"/>
    <property type="project" value="InterPro"/>
</dbReference>
<dbReference type="CDD" id="cd00086">
    <property type="entry name" value="homeodomain"/>
    <property type="match status" value="1"/>
</dbReference>
<dbReference type="Gene3D" id="1.10.10.60">
    <property type="entry name" value="Homeodomain-like"/>
    <property type="match status" value="1"/>
</dbReference>
<dbReference type="InterPro" id="IPR050948">
    <property type="entry name" value="Antp_homeobox_TF"/>
</dbReference>
<dbReference type="InterPro" id="IPR001356">
    <property type="entry name" value="HD"/>
</dbReference>
<dbReference type="InterPro" id="IPR017995">
    <property type="entry name" value="Homeobox_antennapedia"/>
</dbReference>
<dbReference type="InterPro" id="IPR001827">
    <property type="entry name" value="Homeobox_Antennapedia_CS"/>
</dbReference>
<dbReference type="InterPro" id="IPR009057">
    <property type="entry name" value="Homeodomain-like_sf"/>
</dbReference>
<dbReference type="PANTHER" id="PTHR46166">
    <property type="entry name" value="HOMEOBOX DOMAIN-CONTAINING PROTEIN"/>
    <property type="match status" value="1"/>
</dbReference>
<dbReference type="PANTHER" id="PTHR46166:SF2">
    <property type="entry name" value="HOMEOBOX PROTEIN HOX-B8"/>
    <property type="match status" value="1"/>
</dbReference>
<dbReference type="Pfam" id="PF00046">
    <property type="entry name" value="Homeodomain"/>
    <property type="match status" value="1"/>
</dbReference>
<dbReference type="PRINTS" id="PR00025">
    <property type="entry name" value="ANTENNAPEDIA"/>
</dbReference>
<dbReference type="SUPFAM" id="SSF46689">
    <property type="entry name" value="Homeodomain-like"/>
    <property type="match status" value="1"/>
</dbReference>
<dbReference type="PROSITE" id="PS00032">
    <property type="entry name" value="ANTENNAPEDIA"/>
    <property type="match status" value="1"/>
</dbReference>
<dbReference type="PROSITE" id="PS50071">
    <property type="entry name" value="HOMEOBOX_2"/>
    <property type="match status" value="1"/>
</dbReference>
<sequence>YTDCKLAASGLGEEAESSEQSPSPTQLFPWMRPQAAAGRRRGRQTYSRYQTLELEKEFLFNPYLTRKRRIEVSR</sequence>
<accession>P23681</accession>
<evidence type="ECO:0000255" key="1">
    <source>
        <dbReference type="PROSITE-ProRule" id="PRU00108"/>
    </source>
</evidence>
<evidence type="ECO:0000256" key="2">
    <source>
        <dbReference type="SAM" id="MobiDB-lite"/>
    </source>
</evidence>
<evidence type="ECO:0000305" key="3"/>
<keyword id="KW-0217">Developmental protein</keyword>
<keyword id="KW-0238">DNA-binding</keyword>
<keyword id="KW-0371">Homeobox</keyword>
<keyword id="KW-0539">Nucleus</keyword>
<keyword id="KW-1185">Reference proteome</keyword>
<keyword id="KW-0804">Transcription</keyword>
<keyword id="KW-0805">Transcription regulation</keyword>
<proteinExistence type="evidence at transcript level"/>
<protein>
    <recommendedName>
        <fullName>Homeobox protein Hox-B8</fullName>
    </recommendedName>
    <alternativeName>
        <fullName>Homeobox protein Hox-2.4</fullName>
        <shortName>Chox-2.4</shortName>
    </alternativeName>
</protein>
<feature type="chain" id="PRO_0000200152" description="Homeobox protein Hox-B8">
    <location>
        <begin position="1" status="less than"/>
        <end position="74" status="greater than"/>
    </location>
</feature>
<feature type="DNA-binding region" description="Homeobox" evidence="1">
    <location>
        <begin position="39"/>
        <end position="74" status="greater than"/>
    </location>
</feature>
<feature type="region of interest" description="Disordered" evidence="2">
    <location>
        <begin position="1"/>
        <end position="28"/>
    </location>
</feature>
<feature type="short sequence motif" description="Antp-type hexapeptide">
    <location>
        <begin position="27"/>
        <end position="32"/>
    </location>
</feature>
<feature type="compositionally biased region" description="Low complexity" evidence="2">
    <location>
        <begin position="1"/>
        <end position="24"/>
    </location>
</feature>
<feature type="non-terminal residue">
    <location>
        <position position="1"/>
    </location>
</feature>
<feature type="non-terminal residue">
    <location>
        <position position="74"/>
    </location>
</feature>
<reference key="1">
    <citation type="journal article" date="1990" name="Nucleic Acids Res.">
        <title>Isolation and analysis of chick homeobox cDNA clones.</title>
        <authorList>
            <person name="Scotting P.J."/>
            <person name="Hewitt M."/>
            <person name="Keynes R.J."/>
        </authorList>
    </citation>
    <scope>NUCLEOTIDE SEQUENCE [MRNA]</scope>
    <source>
        <strain>Comet Hubbard hybrid</strain>
    </source>
</reference>
<name>HXB8_CHICK</name>